<dbReference type="EC" id="2.8.1.6" evidence="1"/>
<dbReference type="EMBL" id="CP001358">
    <property type="protein sequence ID" value="ACL49203.1"/>
    <property type="molecule type" value="Genomic_DNA"/>
</dbReference>
<dbReference type="SMR" id="B8J0C6"/>
<dbReference type="STRING" id="525146.Ddes_1301"/>
<dbReference type="KEGG" id="dds:Ddes_1301"/>
<dbReference type="eggNOG" id="COG0502">
    <property type="taxonomic scope" value="Bacteria"/>
</dbReference>
<dbReference type="HOGENOM" id="CLU_033172_2_1_7"/>
<dbReference type="UniPathway" id="UPA00078">
    <property type="reaction ID" value="UER00162"/>
</dbReference>
<dbReference type="GO" id="GO:0051537">
    <property type="term" value="F:2 iron, 2 sulfur cluster binding"/>
    <property type="evidence" value="ECO:0007669"/>
    <property type="project" value="UniProtKB-KW"/>
</dbReference>
<dbReference type="GO" id="GO:0051539">
    <property type="term" value="F:4 iron, 4 sulfur cluster binding"/>
    <property type="evidence" value="ECO:0007669"/>
    <property type="project" value="UniProtKB-KW"/>
</dbReference>
<dbReference type="GO" id="GO:0004076">
    <property type="term" value="F:biotin synthase activity"/>
    <property type="evidence" value="ECO:0007669"/>
    <property type="project" value="UniProtKB-UniRule"/>
</dbReference>
<dbReference type="GO" id="GO:0005506">
    <property type="term" value="F:iron ion binding"/>
    <property type="evidence" value="ECO:0007669"/>
    <property type="project" value="UniProtKB-UniRule"/>
</dbReference>
<dbReference type="GO" id="GO:0009102">
    <property type="term" value="P:biotin biosynthetic process"/>
    <property type="evidence" value="ECO:0007669"/>
    <property type="project" value="UniProtKB-UniRule"/>
</dbReference>
<dbReference type="CDD" id="cd01335">
    <property type="entry name" value="Radical_SAM"/>
    <property type="match status" value="1"/>
</dbReference>
<dbReference type="Gene3D" id="3.20.20.70">
    <property type="entry name" value="Aldolase class I"/>
    <property type="match status" value="1"/>
</dbReference>
<dbReference type="HAMAP" id="MF_01694">
    <property type="entry name" value="BioB"/>
    <property type="match status" value="1"/>
</dbReference>
<dbReference type="InterPro" id="IPR013785">
    <property type="entry name" value="Aldolase_TIM"/>
</dbReference>
<dbReference type="InterPro" id="IPR010722">
    <property type="entry name" value="BATS_dom"/>
</dbReference>
<dbReference type="InterPro" id="IPR002684">
    <property type="entry name" value="Biotin_synth/BioAB"/>
</dbReference>
<dbReference type="InterPro" id="IPR024177">
    <property type="entry name" value="Biotin_synthase"/>
</dbReference>
<dbReference type="InterPro" id="IPR006638">
    <property type="entry name" value="Elp3/MiaA/NifB-like_rSAM"/>
</dbReference>
<dbReference type="InterPro" id="IPR007197">
    <property type="entry name" value="rSAM"/>
</dbReference>
<dbReference type="NCBIfam" id="TIGR00433">
    <property type="entry name" value="bioB"/>
    <property type="match status" value="1"/>
</dbReference>
<dbReference type="PANTHER" id="PTHR22976">
    <property type="entry name" value="BIOTIN SYNTHASE"/>
    <property type="match status" value="1"/>
</dbReference>
<dbReference type="PANTHER" id="PTHR22976:SF2">
    <property type="entry name" value="BIOTIN SYNTHASE, MITOCHONDRIAL"/>
    <property type="match status" value="1"/>
</dbReference>
<dbReference type="Pfam" id="PF06968">
    <property type="entry name" value="BATS"/>
    <property type="match status" value="1"/>
</dbReference>
<dbReference type="Pfam" id="PF04055">
    <property type="entry name" value="Radical_SAM"/>
    <property type="match status" value="1"/>
</dbReference>
<dbReference type="PIRSF" id="PIRSF001619">
    <property type="entry name" value="Biotin_synth"/>
    <property type="match status" value="1"/>
</dbReference>
<dbReference type="SFLD" id="SFLDG01278">
    <property type="entry name" value="biotin_synthase_like"/>
    <property type="match status" value="1"/>
</dbReference>
<dbReference type="SFLD" id="SFLDS00029">
    <property type="entry name" value="Radical_SAM"/>
    <property type="match status" value="1"/>
</dbReference>
<dbReference type="SMART" id="SM00876">
    <property type="entry name" value="BATS"/>
    <property type="match status" value="1"/>
</dbReference>
<dbReference type="SMART" id="SM00729">
    <property type="entry name" value="Elp3"/>
    <property type="match status" value="1"/>
</dbReference>
<dbReference type="SUPFAM" id="SSF102114">
    <property type="entry name" value="Radical SAM enzymes"/>
    <property type="match status" value="1"/>
</dbReference>
<dbReference type="PROSITE" id="PS51918">
    <property type="entry name" value="RADICAL_SAM"/>
    <property type="match status" value="1"/>
</dbReference>
<sequence length="316" mass="34358">MTELYTAANPAEALKLVSLPEDELFVGATQLRRATFDNRITLCAIINARSGNCGMDCRFCSQSKHNHTPIETFSLLPDDELRGRILALGTQPVARIGVVTSGGALSGEEFDRLLGVLRSLPEYVLKRVCASLGKLSAVQLAQLMDIGLDRYHHNLETSRRYYPSICTTQTWDQRKATVERVFGAGMTACTGGLFGLGESWRDRIDFAFALKSLGVTHVPMNFLHPHPETPLAGQPPLTAGEALRIVAVFRHILPTATLRICGGRPLVLGARQKEIFAAGANALMTGDYLTTQGRGLVDDLAMIDSLGLEVDCDQSC</sequence>
<protein>
    <recommendedName>
        <fullName evidence="1">Biotin synthase</fullName>
        <ecNumber evidence="1">2.8.1.6</ecNumber>
    </recommendedName>
</protein>
<organism>
    <name type="scientific">Desulfovibrio desulfuricans (strain ATCC 27774 / DSM 6949 / MB)</name>
    <dbReference type="NCBI Taxonomy" id="525146"/>
    <lineage>
        <taxon>Bacteria</taxon>
        <taxon>Pseudomonadati</taxon>
        <taxon>Thermodesulfobacteriota</taxon>
        <taxon>Desulfovibrionia</taxon>
        <taxon>Desulfovibrionales</taxon>
        <taxon>Desulfovibrionaceae</taxon>
        <taxon>Desulfovibrio</taxon>
    </lineage>
</organism>
<proteinExistence type="inferred from homology"/>
<reference key="1">
    <citation type="submission" date="2009-01" db="EMBL/GenBank/DDBJ databases">
        <title>Complete sequence of Desulfovibrio desulfuricans subsp. desulfuricans str. ATCC 27774.</title>
        <authorList>
            <consortium name="US DOE Joint Genome Institute"/>
            <person name="Lucas S."/>
            <person name="Copeland A."/>
            <person name="Lapidus A."/>
            <person name="Glavina del Rio T."/>
            <person name="Tice H."/>
            <person name="Bruce D."/>
            <person name="Goodwin L."/>
            <person name="Pitluck S."/>
            <person name="Sims D."/>
            <person name="Lu M."/>
            <person name="Kiss H."/>
            <person name="Meineke L."/>
            <person name="Brettin T."/>
            <person name="Detter J.C."/>
            <person name="Han C."/>
            <person name="Larimer F."/>
            <person name="Land M."/>
            <person name="Hauser L."/>
            <person name="Kyrpides N."/>
            <person name="Ovchinnikova G."/>
            <person name="Hazen T.C."/>
        </authorList>
    </citation>
    <scope>NUCLEOTIDE SEQUENCE [LARGE SCALE GENOMIC DNA]</scope>
    <source>
        <strain>ATCC 27774 / DSM 6949 / MB</strain>
    </source>
</reference>
<name>BIOB_DESDA</name>
<keyword id="KW-0001">2Fe-2S</keyword>
<keyword id="KW-0004">4Fe-4S</keyword>
<keyword id="KW-0093">Biotin biosynthesis</keyword>
<keyword id="KW-0408">Iron</keyword>
<keyword id="KW-0411">Iron-sulfur</keyword>
<keyword id="KW-0479">Metal-binding</keyword>
<keyword id="KW-0949">S-adenosyl-L-methionine</keyword>
<keyword id="KW-0808">Transferase</keyword>
<feature type="chain" id="PRO_0000381346" description="Biotin synthase">
    <location>
        <begin position="1"/>
        <end position="316"/>
    </location>
</feature>
<feature type="domain" description="Radical SAM core" evidence="2">
    <location>
        <begin position="36"/>
        <end position="264"/>
    </location>
</feature>
<feature type="binding site" evidence="1">
    <location>
        <position position="53"/>
    </location>
    <ligand>
        <name>[4Fe-4S] cluster</name>
        <dbReference type="ChEBI" id="CHEBI:49883"/>
        <note>4Fe-4S-S-AdoMet</note>
    </ligand>
</feature>
<feature type="binding site" evidence="1">
    <location>
        <position position="57"/>
    </location>
    <ligand>
        <name>[4Fe-4S] cluster</name>
        <dbReference type="ChEBI" id="CHEBI:49883"/>
        <note>4Fe-4S-S-AdoMet</note>
    </ligand>
</feature>
<feature type="binding site" evidence="1">
    <location>
        <position position="60"/>
    </location>
    <ligand>
        <name>[4Fe-4S] cluster</name>
        <dbReference type="ChEBI" id="CHEBI:49883"/>
        <note>4Fe-4S-S-AdoMet</note>
    </ligand>
</feature>
<feature type="binding site" evidence="1">
    <location>
        <position position="129"/>
    </location>
    <ligand>
        <name>[2Fe-2S] cluster</name>
        <dbReference type="ChEBI" id="CHEBI:190135"/>
    </ligand>
</feature>
<feature type="binding site" evidence="1">
    <location>
        <position position="189"/>
    </location>
    <ligand>
        <name>[2Fe-2S] cluster</name>
        <dbReference type="ChEBI" id="CHEBI:190135"/>
    </ligand>
</feature>
<feature type="binding site" evidence="1">
    <location>
        <position position="259"/>
    </location>
    <ligand>
        <name>[2Fe-2S] cluster</name>
        <dbReference type="ChEBI" id="CHEBI:190135"/>
    </ligand>
</feature>
<evidence type="ECO:0000255" key="1">
    <source>
        <dbReference type="HAMAP-Rule" id="MF_01694"/>
    </source>
</evidence>
<evidence type="ECO:0000255" key="2">
    <source>
        <dbReference type="PROSITE-ProRule" id="PRU01266"/>
    </source>
</evidence>
<accession>B8J0C6</accession>
<gene>
    <name evidence="1" type="primary">bioB</name>
    <name type="ordered locus">Ddes_1301</name>
</gene>
<comment type="function">
    <text evidence="1">Catalyzes the conversion of dethiobiotin (DTB) to biotin by the insertion of a sulfur atom into dethiobiotin via a radical-based mechanism.</text>
</comment>
<comment type="catalytic activity">
    <reaction evidence="1">
        <text>(4R,5S)-dethiobiotin + (sulfur carrier)-SH + 2 reduced [2Fe-2S]-[ferredoxin] + 2 S-adenosyl-L-methionine = (sulfur carrier)-H + biotin + 2 5'-deoxyadenosine + 2 L-methionine + 2 oxidized [2Fe-2S]-[ferredoxin]</text>
        <dbReference type="Rhea" id="RHEA:22060"/>
        <dbReference type="Rhea" id="RHEA-COMP:10000"/>
        <dbReference type="Rhea" id="RHEA-COMP:10001"/>
        <dbReference type="Rhea" id="RHEA-COMP:14737"/>
        <dbReference type="Rhea" id="RHEA-COMP:14739"/>
        <dbReference type="ChEBI" id="CHEBI:17319"/>
        <dbReference type="ChEBI" id="CHEBI:29917"/>
        <dbReference type="ChEBI" id="CHEBI:33737"/>
        <dbReference type="ChEBI" id="CHEBI:33738"/>
        <dbReference type="ChEBI" id="CHEBI:57586"/>
        <dbReference type="ChEBI" id="CHEBI:57844"/>
        <dbReference type="ChEBI" id="CHEBI:59789"/>
        <dbReference type="ChEBI" id="CHEBI:64428"/>
        <dbReference type="ChEBI" id="CHEBI:149473"/>
        <dbReference type="EC" id="2.8.1.6"/>
    </reaction>
</comment>
<comment type="cofactor">
    <cofactor evidence="1">
        <name>[4Fe-4S] cluster</name>
        <dbReference type="ChEBI" id="CHEBI:49883"/>
    </cofactor>
    <text evidence="1">Binds 1 [4Fe-4S] cluster. The cluster is coordinated with 3 cysteines and an exchangeable S-adenosyl-L-methionine.</text>
</comment>
<comment type="cofactor">
    <cofactor evidence="1">
        <name>[2Fe-2S] cluster</name>
        <dbReference type="ChEBI" id="CHEBI:190135"/>
    </cofactor>
    <text evidence="1">Binds 1 [2Fe-2S] cluster. The cluster is coordinated with 3 cysteines and 1 arginine.</text>
</comment>
<comment type="pathway">
    <text evidence="1">Cofactor biosynthesis; biotin biosynthesis; biotin from 7,8-diaminononanoate: step 2/2.</text>
</comment>
<comment type="subunit">
    <text evidence="1">Homodimer.</text>
</comment>
<comment type="similarity">
    <text evidence="1">Belongs to the radical SAM superfamily. Biotin synthase family.</text>
</comment>